<gene>
    <name evidence="1" type="primary">rpsK</name>
    <name type="ordered locus">SP70585_0290</name>
</gene>
<organism>
    <name type="scientific">Streptococcus pneumoniae (strain 70585)</name>
    <dbReference type="NCBI Taxonomy" id="488221"/>
    <lineage>
        <taxon>Bacteria</taxon>
        <taxon>Bacillati</taxon>
        <taxon>Bacillota</taxon>
        <taxon>Bacilli</taxon>
        <taxon>Lactobacillales</taxon>
        <taxon>Streptococcaceae</taxon>
        <taxon>Streptococcus</taxon>
    </lineage>
</organism>
<keyword id="KW-0687">Ribonucleoprotein</keyword>
<keyword id="KW-0689">Ribosomal protein</keyword>
<keyword id="KW-0694">RNA-binding</keyword>
<keyword id="KW-0699">rRNA-binding</keyword>
<comment type="function">
    <text evidence="1">Located on the platform of the 30S subunit, it bridges several disparate RNA helices of the 16S rRNA. Forms part of the Shine-Dalgarno cleft in the 70S ribosome.</text>
</comment>
<comment type="subunit">
    <text evidence="1">Part of the 30S ribosomal subunit. Interacts with proteins S7 and S18. Binds to IF-3.</text>
</comment>
<comment type="similarity">
    <text evidence="1">Belongs to the universal ribosomal protein uS11 family.</text>
</comment>
<proteinExistence type="inferred from homology"/>
<feature type="chain" id="PRO_1000165569" description="Small ribosomal subunit protein uS11">
    <location>
        <begin position="1"/>
        <end position="127"/>
    </location>
</feature>
<evidence type="ECO:0000255" key="1">
    <source>
        <dbReference type="HAMAP-Rule" id="MF_01310"/>
    </source>
</evidence>
<evidence type="ECO:0000305" key="2"/>
<accession>C1CAN7</accession>
<reference key="1">
    <citation type="journal article" date="2010" name="Genome Biol.">
        <title>Structure and dynamics of the pan-genome of Streptococcus pneumoniae and closely related species.</title>
        <authorList>
            <person name="Donati C."/>
            <person name="Hiller N.L."/>
            <person name="Tettelin H."/>
            <person name="Muzzi A."/>
            <person name="Croucher N.J."/>
            <person name="Angiuoli S.V."/>
            <person name="Oggioni M."/>
            <person name="Dunning Hotopp J.C."/>
            <person name="Hu F.Z."/>
            <person name="Riley D.R."/>
            <person name="Covacci A."/>
            <person name="Mitchell T.J."/>
            <person name="Bentley S.D."/>
            <person name="Kilian M."/>
            <person name="Ehrlich G.D."/>
            <person name="Rappuoli R."/>
            <person name="Moxon E.R."/>
            <person name="Masignani V."/>
        </authorList>
    </citation>
    <scope>NUCLEOTIDE SEQUENCE [LARGE SCALE GENOMIC DNA]</scope>
    <source>
        <strain>70585</strain>
    </source>
</reference>
<protein>
    <recommendedName>
        <fullName evidence="1">Small ribosomal subunit protein uS11</fullName>
    </recommendedName>
    <alternativeName>
        <fullName evidence="2">30S ribosomal protein S11</fullName>
    </alternativeName>
</protein>
<dbReference type="EMBL" id="CP000918">
    <property type="protein sequence ID" value="ACO16517.1"/>
    <property type="molecule type" value="Genomic_DNA"/>
</dbReference>
<dbReference type="RefSeq" id="WP_001118385.1">
    <property type="nucleotide sequence ID" value="NC_012468.1"/>
</dbReference>
<dbReference type="SMR" id="C1CAN7"/>
<dbReference type="GeneID" id="93964226"/>
<dbReference type="KEGG" id="snm:SP70585_0290"/>
<dbReference type="HOGENOM" id="CLU_072439_5_0_9"/>
<dbReference type="Proteomes" id="UP000002211">
    <property type="component" value="Chromosome"/>
</dbReference>
<dbReference type="GO" id="GO:1990904">
    <property type="term" value="C:ribonucleoprotein complex"/>
    <property type="evidence" value="ECO:0007669"/>
    <property type="project" value="UniProtKB-KW"/>
</dbReference>
<dbReference type="GO" id="GO:0005840">
    <property type="term" value="C:ribosome"/>
    <property type="evidence" value="ECO:0007669"/>
    <property type="project" value="UniProtKB-KW"/>
</dbReference>
<dbReference type="GO" id="GO:0019843">
    <property type="term" value="F:rRNA binding"/>
    <property type="evidence" value="ECO:0007669"/>
    <property type="project" value="UniProtKB-UniRule"/>
</dbReference>
<dbReference type="GO" id="GO:0003735">
    <property type="term" value="F:structural constituent of ribosome"/>
    <property type="evidence" value="ECO:0007669"/>
    <property type="project" value="InterPro"/>
</dbReference>
<dbReference type="GO" id="GO:0006412">
    <property type="term" value="P:translation"/>
    <property type="evidence" value="ECO:0007669"/>
    <property type="project" value="UniProtKB-UniRule"/>
</dbReference>
<dbReference type="FunFam" id="3.30.420.80:FF:000001">
    <property type="entry name" value="30S ribosomal protein S11"/>
    <property type="match status" value="1"/>
</dbReference>
<dbReference type="Gene3D" id="3.30.420.80">
    <property type="entry name" value="Ribosomal protein S11"/>
    <property type="match status" value="1"/>
</dbReference>
<dbReference type="HAMAP" id="MF_01310">
    <property type="entry name" value="Ribosomal_uS11"/>
    <property type="match status" value="1"/>
</dbReference>
<dbReference type="InterPro" id="IPR001971">
    <property type="entry name" value="Ribosomal_uS11"/>
</dbReference>
<dbReference type="InterPro" id="IPR019981">
    <property type="entry name" value="Ribosomal_uS11_bac-type"/>
</dbReference>
<dbReference type="InterPro" id="IPR018102">
    <property type="entry name" value="Ribosomal_uS11_CS"/>
</dbReference>
<dbReference type="InterPro" id="IPR036967">
    <property type="entry name" value="Ribosomal_uS11_sf"/>
</dbReference>
<dbReference type="NCBIfam" id="NF003698">
    <property type="entry name" value="PRK05309.1"/>
    <property type="match status" value="1"/>
</dbReference>
<dbReference type="NCBIfam" id="TIGR03632">
    <property type="entry name" value="uS11_bact"/>
    <property type="match status" value="1"/>
</dbReference>
<dbReference type="PANTHER" id="PTHR11759">
    <property type="entry name" value="40S RIBOSOMAL PROTEIN S14/30S RIBOSOMAL PROTEIN S11"/>
    <property type="match status" value="1"/>
</dbReference>
<dbReference type="Pfam" id="PF00411">
    <property type="entry name" value="Ribosomal_S11"/>
    <property type="match status" value="1"/>
</dbReference>
<dbReference type="PIRSF" id="PIRSF002131">
    <property type="entry name" value="Ribosomal_S11"/>
    <property type="match status" value="1"/>
</dbReference>
<dbReference type="SUPFAM" id="SSF53137">
    <property type="entry name" value="Translational machinery components"/>
    <property type="match status" value="1"/>
</dbReference>
<dbReference type="PROSITE" id="PS00054">
    <property type="entry name" value="RIBOSOMAL_S11"/>
    <property type="match status" value="1"/>
</dbReference>
<name>RS11_STRP7</name>
<sequence length="127" mass="13385">MAKPTRKRRVKKNIESGIAHIHATFNNTIVMITDVHGNAIAWSSAGALGFKGSRKSTPFAAQMASEAAAKSAQEHGLKSVEVTVKGPGSGRESAIRALAAAGLEVTAIRDVTPVPHNGARPPKRRRV</sequence>